<reference key="1">
    <citation type="journal article" date="1998" name="DNA Res.">
        <title>Structural analysis of Arabidopsis thaliana chromosome 5. V. Sequence features of the regions of 1,381,565 bp covered by twenty one physically assigned P1 and TAC clones.</title>
        <authorList>
            <person name="Kaneko T."/>
            <person name="Kotani H."/>
            <person name="Nakamura Y."/>
            <person name="Sato S."/>
            <person name="Asamizu E."/>
            <person name="Miyajima N."/>
            <person name="Tabata S."/>
        </authorList>
    </citation>
    <scope>NUCLEOTIDE SEQUENCE [LARGE SCALE GENOMIC DNA]</scope>
    <source>
        <strain>cv. Columbia</strain>
    </source>
</reference>
<reference key="2">
    <citation type="journal article" date="2017" name="Plant J.">
        <title>Araport11: a complete reannotation of the Arabidopsis thaliana reference genome.</title>
        <authorList>
            <person name="Cheng C.Y."/>
            <person name="Krishnakumar V."/>
            <person name="Chan A.P."/>
            <person name="Thibaud-Nissen F."/>
            <person name="Schobel S."/>
            <person name="Town C.D."/>
        </authorList>
    </citation>
    <scope>GENOME REANNOTATION</scope>
    <source>
        <strain>cv. Columbia</strain>
    </source>
</reference>
<reference key="3">
    <citation type="submission" date="2002-03" db="EMBL/GenBank/DDBJ databases">
        <title>Full-length cDNA from Arabidopsis thaliana.</title>
        <authorList>
            <person name="Brover V.V."/>
            <person name="Troukhan M.E."/>
            <person name="Alexandrov N.A."/>
            <person name="Lu Y.-P."/>
            <person name="Flavell R.B."/>
            <person name="Feldmann K.A."/>
        </authorList>
    </citation>
    <scope>NUCLEOTIDE SEQUENCE [LARGE SCALE MRNA]</scope>
</reference>
<sequence>MNTLEEVDESTHIFNALMSLMRKFLFRVLCVGPIPTNISFIMDGNRRFAKKHNLIGLDAGHRAGFISVKYILQYCKEIGVPYVTLHAFGMDNFKRGPEEVKCVMDLMLEKVELAIDQAVSGNMNGVRIIFAGDLDSLNEHFRAATKKLMELTEENRDLIVVVCVAYSTSLEIVHAVRKSCVRKCTNGDDLVLLELSDVEECMYTSIVPVPDLVIRTGGGDRLSNFMTWQTSRSLLHRTEALWPELGLWHLVWAILKFQRMQDYLTKKKKLD</sequence>
<feature type="chain" id="PRO_0000123757" description="Dehydrodolichyl diphosphate synthase 7">
    <location>
        <begin position="1"/>
        <end position="271"/>
    </location>
</feature>
<feature type="transmembrane region" description="Helical" evidence="2">
    <location>
        <begin position="24"/>
        <end position="41"/>
    </location>
</feature>
<gene>
    <name type="ordered locus">At5g60500</name>
    <name type="ORF">MUF9.13</name>
</gene>
<evidence type="ECO:0000250" key="1"/>
<evidence type="ECO:0000255" key="2"/>
<evidence type="ECO:0000305" key="3"/>
<accession>Q8LED0</accession>
<accession>Q9FKJ7</accession>
<dbReference type="EC" id="2.5.1.-"/>
<dbReference type="EMBL" id="AB011483">
    <property type="protein sequence ID" value="BAB08233.1"/>
    <property type="status" value="ALT_INIT"/>
    <property type="molecule type" value="Genomic_DNA"/>
</dbReference>
<dbReference type="EMBL" id="CP002688">
    <property type="protein sequence ID" value="AED97337.1"/>
    <property type="molecule type" value="Genomic_DNA"/>
</dbReference>
<dbReference type="EMBL" id="AY085488">
    <property type="protein sequence ID" value="AAM62714.1"/>
    <property type="molecule type" value="mRNA"/>
</dbReference>
<dbReference type="SMR" id="Q8LED0"/>
<dbReference type="FunCoup" id="Q8LED0">
    <property type="interactions" value="3401"/>
</dbReference>
<dbReference type="STRING" id="3702.Q8LED0"/>
<dbReference type="PaxDb" id="3702-AT5G60500.1"/>
<dbReference type="ProteomicsDB" id="224605"/>
<dbReference type="EnsemblPlants" id="AT5G60500.1">
    <property type="protein sequence ID" value="AT5G60500.1"/>
    <property type="gene ID" value="AT5G60500"/>
</dbReference>
<dbReference type="Gramene" id="AT5G60500.1">
    <property type="protein sequence ID" value="AT5G60500.1"/>
    <property type="gene ID" value="AT5G60500"/>
</dbReference>
<dbReference type="KEGG" id="ath:AT5G60500"/>
<dbReference type="Araport" id="AT5G60500"/>
<dbReference type="TAIR" id="AT5G60500">
    <property type="gene designation" value="CPT8"/>
</dbReference>
<dbReference type="eggNOG" id="KOG1602">
    <property type="taxonomic scope" value="Eukaryota"/>
</dbReference>
<dbReference type="HOGENOM" id="CLU_038505_0_5_1"/>
<dbReference type="InParanoid" id="Q8LED0"/>
<dbReference type="OMA" id="DESTHIF"/>
<dbReference type="PhylomeDB" id="Q8LED0"/>
<dbReference type="BioCyc" id="ARA:AT5G60500-MONOMER"/>
<dbReference type="UniPathway" id="UPA00378"/>
<dbReference type="PRO" id="PR:Q8LED0"/>
<dbReference type="Proteomes" id="UP000006548">
    <property type="component" value="Chromosome 5"/>
</dbReference>
<dbReference type="ExpressionAtlas" id="Q8LED0">
    <property type="expression patterns" value="baseline and differential"/>
</dbReference>
<dbReference type="GO" id="GO:0005789">
    <property type="term" value="C:endoplasmic reticulum membrane"/>
    <property type="evidence" value="ECO:0007669"/>
    <property type="project" value="UniProtKB-SubCell"/>
</dbReference>
<dbReference type="GO" id="GO:0016765">
    <property type="term" value="F:transferase activity, transferring alkyl or aryl (other than methyl) groups"/>
    <property type="evidence" value="ECO:0007669"/>
    <property type="project" value="InterPro"/>
</dbReference>
<dbReference type="GO" id="GO:0006486">
    <property type="term" value="P:protein glycosylation"/>
    <property type="evidence" value="ECO:0007669"/>
    <property type="project" value="UniProtKB-UniPathway"/>
</dbReference>
<dbReference type="CDD" id="cd00475">
    <property type="entry name" value="Cis_IPPS"/>
    <property type="match status" value="1"/>
</dbReference>
<dbReference type="Gene3D" id="3.40.1180.10">
    <property type="entry name" value="Decaprenyl diphosphate synthase-like"/>
    <property type="match status" value="1"/>
</dbReference>
<dbReference type="InterPro" id="IPR001441">
    <property type="entry name" value="UPP_synth-like"/>
</dbReference>
<dbReference type="InterPro" id="IPR018520">
    <property type="entry name" value="UPP_synth-like_CS"/>
</dbReference>
<dbReference type="InterPro" id="IPR036424">
    <property type="entry name" value="UPP_synth-like_sf"/>
</dbReference>
<dbReference type="NCBIfam" id="TIGR00055">
    <property type="entry name" value="uppS"/>
    <property type="match status" value="1"/>
</dbReference>
<dbReference type="PANTHER" id="PTHR10291:SF42">
    <property type="entry name" value="DEHYDRODOLICHYL DIPHOSPHATE SYNTHASE 7-RELATED"/>
    <property type="match status" value="1"/>
</dbReference>
<dbReference type="PANTHER" id="PTHR10291">
    <property type="entry name" value="DEHYDRODOLICHYL DIPHOSPHATE SYNTHASE FAMILY MEMBER"/>
    <property type="match status" value="1"/>
</dbReference>
<dbReference type="Pfam" id="PF01255">
    <property type="entry name" value="Prenyltransf"/>
    <property type="match status" value="1"/>
</dbReference>
<dbReference type="SUPFAM" id="SSF64005">
    <property type="entry name" value="Undecaprenyl diphosphate synthase"/>
    <property type="match status" value="1"/>
</dbReference>
<dbReference type="PROSITE" id="PS01066">
    <property type="entry name" value="UPP_SYNTHASE"/>
    <property type="match status" value="1"/>
</dbReference>
<comment type="function">
    <text evidence="1">Catalyzes cis-prenyl chain elongation to produce the polyprenyl backbone of dolichol, a glycosyl carrier-lipid required for the biosynthesis of several classes of glycoprotein.</text>
</comment>
<comment type="cofactor">
    <cofactor evidence="1">
        <name>Mg(2+)</name>
        <dbReference type="ChEBI" id="CHEBI:18420"/>
    </cofactor>
</comment>
<comment type="pathway">
    <text>Protein modification; protein glycosylation.</text>
</comment>
<comment type="subcellular location">
    <subcellularLocation>
        <location evidence="1">Endoplasmic reticulum membrane</location>
        <topology evidence="1">Single-pass membrane protein</topology>
    </subcellularLocation>
</comment>
<comment type="similarity">
    <text evidence="3">Belongs to the UPP synthase family.</text>
</comment>
<comment type="sequence caution" evidence="3">
    <conflict type="erroneous initiation">
        <sequence resource="EMBL-CDS" id="BAB08233"/>
    </conflict>
</comment>
<organism>
    <name type="scientific">Arabidopsis thaliana</name>
    <name type="common">Mouse-ear cress</name>
    <dbReference type="NCBI Taxonomy" id="3702"/>
    <lineage>
        <taxon>Eukaryota</taxon>
        <taxon>Viridiplantae</taxon>
        <taxon>Streptophyta</taxon>
        <taxon>Embryophyta</taxon>
        <taxon>Tracheophyta</taxon>
        <taxon>Spermatophyta</taxon>
        <taxon>Magnoliopsida</taxon>
        <taxon>eudicotyledons</taxon>
        <taxon>Gunneridae</taxon>
        <taxon>Pentapetalae</taxon>
        <taxon>rosids</taxon>
        <taxon>malvids</taxon>
        <taxon>Brassicales</taxon>
        <taxon>Brassicaceae</taxon>
        <taxon>Camelineae</taxon>
        <taxon>Arabidopsis</taxon>
    </lineage>
</organism>
<protein>
    <recommendedName>
        <fullName>Dehydrodolichyl diphosphate synthase 7</fullName>
        <shortName>Dedol-PP synthase 7</shortName>
        <ecNumber>2.5.1.-</ecNumber>
    </recommendedName>
</protein>
<proteinExistence type="evidence at transcript level"/>
<keyword id="KW-0256">Endoplasmic reticulum</keyword>
<keyword id="KW-0472">Membrane</keyword>
<keyword id="KW-1185">Reference proteome</keyword>
<keyword id="KW-0808">Transferase</keyword>
<keyword id="KW-0812">Transmembrane</keyword>
<keyword id="KW-1133">Transmembrane helix</keyword>
<name>DDPS7_ARATH</name>